<protein>
    <recommendedName>
        <fullName evidence="1">Urease accessory protein UreD</fullName>
    </recommendedName>
</protein>
<gene>
    <name evidence="1" type="primary">ureD</name>
    <name type="ordered locus">SCO1231</name>
    <name type="ORF">2SCG1.06c</name>
</gene>
<evidence type="ECO:0000255" key="1">
    <source>
        <dbReference type="HAMAP-Rule" id="MF_01384"/>
    </source>
</evidence>
<name>URED_STRCO</name>
<comment type="function">
    <text evidence="1">Required for maturation of urease via the functional incorporation of the urease nickel metallocenter.</text>
</comment>
<comment type="subunit">
    <text evidence="1">UreD, UreF and UreG form a complex that acts as a GTP-hydrolysis-dependent molecular chaperone, activating the urease apoprotein by helping to assemble the nickel containing metallocenter of UreC. The UreE protein probably delivers the nickel.</text>
</comment>
<comment type="subcellular location">
    <subcellularLocation>
        <location evidence="1">Cytoplasm</location>
    </subcellularLocation>
</comment>
<comment type="similarity">
    <text evidence="1">Belongs to the UreD family.</text>
</comment>
<organism>
    <name type="scientific">Streptomyces coelicolor (strain ATCC BAA-471 / A3(2) / M145)</name>
    <dbReference type="NCBI Taxonomy" id="100226"/>
    <lineage>
        <taxon>Bacteria</taxon>
        <taxon>Bacillati</taxon>
        <taxon>Actinomycetota</taxon>
        <taxon>Actinomycetes</taxon>
        <taxon>Kitasatosporales</taxon>
        <taxon>Streptomycetaceae</taxon>
        <taxon>Streptomyces</taxon>
        <taxon>Streptomyces albidoflavus group</taxon>
    </lineage>
</organism>
<proteinExistence type="inferred from homology"/>
<feature type="chain" id="PRO_0000340521" description="Urease accessory protein UreD">
    <location>
        <begin position="1"/>
        <end position="254"/>
    </location>
</feature>
<accession>Q9FCD6</accession>
<reference key="1">
    <citation type="journal article" date="2002" name="Nature">
        <title>Complete genome sequence of the model actinomycete Streptomyces coelicolor A3(2).</title>
        <authorList>
            <person name="Bentley S.D."/>
            <person name="Chater K.F."/>
            <person name="Cerdeno-Tarraga A.-M."/>
            <person name="Challis G.L."/>
            <person name="Thomson N.R."/>
            <person name="James K.D."/>
            <person name="Harris D.E."/>
            <person name="Quail M.A."/>
            <person name="Kieser H."/>
            <person name="Harper D."/>
            <person name="Bateman A."/>
            <person name="Brown S."/>
            <person name="Chandra G."/>
            <person name="Chen C.W."/>
            <person name="Collins M."/>
            <person name="Cronin A."/>
            <person name="Fraser A."/>
            <person name="Goble A."/>
            <person name="Hidalgo J."/>
            <person name="Hornsby T."/>
            <person name="Howarth S."/>
            <person name="Huang C.-H."/>
            <person name="Kieser T."/>
            <person name="Larke L."/>
            <person name="Murphy L.D."/>
            <person name="Oliver K."/>
            <person name="O'Neil S."/>
            <person name="Rabbinowitsch E."/>
            <person name="Rajandream M.A."/>
            <person name="Rutherford K.M."/>
            <person name="Rutter S."/>
            <person name="Seeger K."/>
            <person name="Saunders D."/>
            <person name="Sharp S."/>
            <person name="Squares R."/>
            <person name="Squares S."/>
            <person name="Taylor K."/>
            <person name="Warren T."/>
            <person name="Wietzorrek A."/>
            <person name="Woodward J.R."/>
            <person name="Barrell B.G."/>
            <person name="Parkhill J."/>
            <person name="Hopwood D.A."/>
        </authorList>
    </citation>
    <scope>NUCLEOTIDE SEQUENCE [LARGE SCALE GENOMIC DNA]</scope>
    <source>
        <strain>ATCC BAA-471 / A3(2) / M145</strain>
    </source>
</reference>
<keyword id="KW-0143">Chaperone</keyword>
<keyword id="KW-0963">Cytoplasm</keyword>
<keyword id="KW-0996">Nickel insertion</keyword>
<keyword id="KW-1185">Reference proteome</keyword>
<sequence>MTTVAGGVRASARVLARGDGRGGTVLPVLEGEGPLAVRRTRGSGAEARVMLVGAMSGPLGGDHFEVGAHAANGARLRVGSAAATLALPGQDKAGARYDVRLTVDDDAELYWLPEQLISAGGSDLTVTTSVDLAAGARLLLREEQVLGRAGEEPGRLTSRLTLRIDGRGVLDQELLCGPGAPGGWDGPAGLAGHRAVGQLVVVRPGFATEPPAARVFEEGAAVMPLAGPAALVTAVAPDALRLRRLLDGALASLD</sequence>
<dbReference type="EMBL" id="AL939108">
    <property type="protein sequence ID" value="CAC01455.1"/>
    <property type="molecule type" value="Genomic_DNA"/>
</dbReference>
<dbReference type="RefSeq" id="NP_625519.1">
    <property type="nucleotide sequence ID" value="NC_003888.3"/>
</dbReference>
<dbReference type="RefSeq" id="WP_011027661.1">
    <property type="nucleotide sequence ID" value="NZ_VNID01000006.1"/>
</dbReference>
<dbReference type="SMR" id="Q9FCD6"/>
<dbReference type="STRING" id="100226.gene:17758814"/>
<dbReference type="PaxDb" id="100226-SCO1231"/>
<dbReference type="KEGG" id="sco:SCO1231"/>
<dbReference type="PATRIC" id="fig|100226.15.peg.1230"/>
<dbReference type="eggNOG" id="COG0829">
    <property type="taxonomic scope" value="Bacteria"/>
</dbReference>
<dbReference type="HOGENOM" id="CLU_055097_2_0_11"/>
<dbReference type="InParanoid" id="Q9FCD6"/>
<dbReference type="OrthoDB" id="8677206at2"/>
<dbReference type="PhylomeDB" id="Q9FCD6"/>
<dbReference type="Proteomes" id="UP000001973">
    <property type="component" value="Chromosome"/>
</dbReference>
<dbReference type="GO" id="GO:0005737">
    <property type="term" value="C:cytoplasm"/>
    <property type="evidence" value="ECO:0007669"/>
    <property type="project" value="UniProtKB-SubCell"/>
</dbReference>
<dbReference type="GO" id="GO:0016151">
    <property type="term" value="F:nickel cation binding"/>
    <property type="evidence" value="ECO:0007669"/>
    <property type="project" value="UniProtKB-UniRule"/>
</dbReference>
<dbReference type="HAMAP" id="MF_01384">
    <property type="entry name" value="UreD"/>
    <property type="match status" value="1"/>
</dbReference>
<dbReference type="InterPro" id="IPR002669">
    <property type="entry name" value="UreD"/>
</dbReference>
<dbReference type="Pfam" id="PF01774">
    <property type="entry name" value="UreD"/>
    <property type="match status" value="1"/>
</dbReference>